<keyword id="KW-0067">ATP-binding</keyword>
<keyword id="KW-0520">NAD</keyword>
<keyword id="KW-0547">Nucleotide-binding</keyword>
<keyword id="KW-0548">Nucleotidyltransferase</keyword>
<keyword id="KW-0662">Pyridine nucleotide biosynthesis</keyword>
<keyword id="KW-1185">Reference proteome</keyword>
<keyword id="KW-0808">Transferase</keyword>
<name>NADD_FRAAA</name>
<dbReference type="EC" id="2.7.7.18" evidence="1"/>
<dbReference type="EMBL" id="CT573213">
    <property type="protein sequence ID" value="CAJ60585.1"/>
    <property type="status" value="ALT_INIT"/>
    <property type="molecule type" value="Genomic_DNA"/>
</dbReference>
<dbReference type="RefSeq" id="WP_011603109.1">
    <property type="nucleotide sequence ID" value="NC_008278.1"/>
</dbReference>
<dbReference type="SMR" id="Q0RPE7"/>
<dbReference type="STRING" id="326424.FRAAL1936"/>
<dbReference type="KEGG" id="fal:FRAAL1936"/>
<dbReference type="eggNOG" id="COG1057">
    <property type="taxonomic scope" value="Bacteria"/>
</dbReference>
<dbReference type="HOGENOM" id="CLU_069765_1_1_11"/>
<dbReference type="UniPathway" id="UPA00253">
    <property type="reaction ID" value="UER00332"/>
</dbReference>
<dbReference type="Proteomes" id="UP000000657">
    <property type="component" value="Chromosome"/>
</dbReference>
<dbReference type="GO" id="GO:0005524">
    <property type="term" value="F:ATP binding"/>
    <property type="evidence" value="ECO:0007669"/>
    <property type="project" value="UniProtKB-KW"/>
</dbReference>
<dbReference type="GO" id="GO:0004515">
    <property type="term" value="F:nicotinate-nucleotide adenylyltransferase activity"/>
    <property type="evidence" value="ECO:0007669"/>
    <property type="project" value="UniProtKB-UniRule"/>
</dbReference>
<dbReference type="GO" id="GO:0009435">
    <property type="term" value="P:NAD biosynthetic process"/>
    <property type="evidence" value="ECO:0007669"/>
    <property type="project" value="UniProtKB-UniRule"/>
</dbReference>
<dbReference type="CDD" id="cd02165">
    <property type="entry name" value="NMNAT"/>
    <property type="match status" value="1"/>
</dbReference>
<dbReference type="FunFam" id="3.40.50.620:FF:000039">
    <property type="entry name" value="Probable nicotinate-nucleotide adenylyltransferase"/>
    <property type="match status" value="1"/>
</dbReference>
<dbReference type="Gene3D" id="3.40.50.620">
    <property type="entry name" value="HUPs"/>
    <property type="match status" value="1"/>
</dbReference>
<dbReference type="HAMAP" id="MF_00244">
    <property type="entry name" value="NaMN_adenylyltr"/>
    <property type="match status" value="1"/>
</dbReference>
<dbReference type="InterPro" id="IPR004821">
    <property type="entry name" value="Cyt_trans-like"/>
</dbReference>
<dbReference type="InterPro" id="IPR005248">
    <property type="entry name" value="NadD/NMNAT"/>
</dbReference>
<dbReference type="InterPro" id="IPR014729">
    <property type="entry name" value="Rossmann-like_a/b/a_fold"/>
</dbReference>
<dbReference type="NCBIfam" id="TIGR00125">
    <property type="entry name" value="cyt_tran_rel"/>
    <property type="match status" value="1"/>
</dbReference>
<dbReference type="NCBIfam" id="TIGR00482">
    <property type="entry name" value="nicotinate (nicotinamide) nucleotide adenylyltransferase"/>
    <property type="match status" value="1"/>
</dbReference>
<dbReference type="NCBIfam" id="NF000840">
    <property type="entry name" value="PRK00071.1-3"/>
    <property type="match status" value="1"/>
</dbReference>
<dbReference type="PANTHER" id="PTHR39321">
    <property type="entry name" value="NICOTINATE-NUCLEOTIDE ADENYLYLTRANSFERASE-RELATED"/>
    <property type="match status" value="1"/>
</dbReference>
<dbReference type="PANTHER" id="PTHR39321:SF3">
    <property type="entry name" value="PHOSPHOPANTETHEINE ADENYLYLTRANSFERASE"/>
    <property type="match status" value="1"/>
</dbReference>
<dbReference type="Pfam" id="PF01467">
    <property type="entry name" value="CTP_transf_like"/>
    <property type="match status" value="1"/>
</dbReference>
<dbReference type="SUPFAM" id="SSF52374">
    <property type="entry name" value="Nucleotidylyl transferase"/>
    <property type="match status" value="1"/>
</dbReference>
<protein>
    <recommendedName>
        <fullName evidence="1">Probable nicotinate-nucleotide adenylyltransferase</fullName>
        <ecNumber evidence="1">2.7.7.18</ecNumber>
    </recommendedName>
    <alternativeName>
        <fullName evidence="1">Deamido-NAD(+) diphosphorylase</fullName>
    </alternativeName>
    <alternativeName>
        <fullName evidence="1">Deamido-NAD(+) pyrophosphorylase</fullName>
    </alternativeName>
    <alternativeName>
        <fullName evidence="1">Nicotinate mononucleotide adenylyltransferase</fullName>
        <shortName evidence="1">NaMN adenylyltransferase</shortName>
    </alternativeName>
</protein>
<proteinExistence type="inferred from homology"/>
<reference key="1">
    <citation type="journal article" date="2007" name="Genome Res.">
        <title>Genome characteristics of facultatively symbiotic Frankia sp. strains reflect host range and host plant biogeography.</title>
        <authorList>
            <person name="Normand P."/>
            <person name="Lapierre P."/>
            <person name="Tisa L.S."/>
            <person name="Gogarten J.P."/>
            <person name="Alloisio N."/>
            <person name="Bagnarol E."/>
            <person name="Bassi C.A."/>
            <person name="Berry A.M."/>
            <person name="Bickhart D.M."/>
            <person name="Choisne N."/>
            <person name="Couloux A."/>
            <person name="Cournoyer B."/>
            <person name="Cruveiller S."/>
            <person name="Daubin V."/>
            <person name="Demange N."/>
            <person name="Francino M.P."/>
            <person name="Goltsman E."/>
            <person name="Huang Y."/>
            <person name="Kopp O.R."/>
            <person name="Labarre L."/>
            <person name="Lapidus A."/>
            <person name="Lavire C."/>
            <person name="Marechal J."/>
            <person name="Martinez M."/>
            <person name="Mastronunzio J.E."/>
            <person name="Mullin B.C."/>
            <person name="Niemann J."/>
            <person name="Pujic P."/>
            <person name="Rawnsley T."/>
            <person name="Rouy Z."/>
            <person name="Schenowitz C."/>
            <person name="Sellstedt A."/>
            <person name="Tavares F."/>
            <person name="Tomkins J.P."/>
            <person name="Vallenet D."/>
            <person name="Valverde C."/>
            <person name="Wall L.G."/>
            <person name="Wang Y."/>
            <person name="Medigue C."/>
            <person name="Benson D.R."/>
        </authorList>
    </citation>
    <scope>NUCLEOTIDE SEQUENCE [LARGE SCALE GENOMIC DNA]</scope>
    <source>
        <strain>DSM 45986 / CECT 9034 / ACN14a</strain>
    </source>
</reference>
<evidence type="ECO:0000255" key="1">
    <source>
        <dbReference type="HAMAP-Rule" id="MF_00244"/>
    </source>
</evidence>
<evidence type="ECO:0000305" key="2"/>
<gene>
    <name evidence="1" type="primary">nadD</name>
    <name type="ordered locus">FRAAL1936</name>
</gene>
<accession>Q0RPE7</accession>
<feature type="chain" id="PRO_0000336692" description="Probable nicotinate-nucleotide adenylyltransferase">
    <location>
        <begin position="1"/>
        <end position="190"/>
    </location>
</feature>
<comment type="function">
    <text evidence="1">Catalyzes the reversible adenylation of nicotinate mononucleotide (NaMN) to nicotinic acid adenine dinucleotide (NaAD).</text>
</comment>
<comment type="catalytic activity">
    <reaction evidence="1">
        <text>nicotinate beta-D-ribonucleotide + ATP + H(+) = deamido-NAD(+) + diphosphate</text>
        <dbReference type="Rhea" id="RHEA:22860"/>
        <dbReference type="ChEBI" id="CHEBI:15378"/>
        <dbReference type="ChEBI" id="CHEBI:30616"/>
        <dbReference type="ChEBI" id="CHEBI:33019"/>
        <dbReference type="ChEBI" id="CHEBI:57502"/>
        <dbReference type="ChEBI" id="CHEBI:58437"/>
        <dbReference type="EC" id="2.7.7.18"/>
    </reaction>
</comment>
<comment type="pathway">
    <text evidence="1">Cofactor biosynthesis; NAD(+) biosynthesis; deamido-NAD(+) from nicotinate D-ribonucleotide: step 1/1.</text>
</comment>
<comment type="similarity">
    <text evidence="1">Belongs to the NadD family.</text>
</comment>
<comment type="sequence caution" evidence="2">
    <conflict type="erroneous initiation">
        <sequence resource="EMBL-CDS" id="CAJ60585"/>
    </conflict>
</comment>
<organism>
    <name type="scientific">Frankia alni (strain DSM 45986 / CECT 9034 / ACN14a)</name>
    <dbReference type="NCBI Taxonomy" id="326424"/>
    <lineage>
        <taxon>Bacteria</taxon>
        <taxon>Bacillati</taxon>
        <taxon>Actinomycetota</taxon>
        <taxon>Actinomycetes</taxon>
        <taxon>Frankiales</taxon>
        <taxon>Frankiaceae</taxon>
        <taxon>Frankia</taxon>
    </lineage>
</organism>
<sequence length="190" mass="21107">MGGTFDPVHNGHLVAASEVAALFDLDEVVFVPSGQPWQKVHRVVSDPEDRYLMTFLATAENPQFTVSRVEIDRGGATYTIDTLRDLRGARPDDELFFITGADALAQIFTWRDHRELFELAHFVGVSRPGYQLALDAALPANSVSLLEVPALAISSSDIRQRVGRGAPIWYLTPDGVVRYIAKRHLYQSRA</sequence>